<evidence type="ECO:0000255" key="1">
    <source>
        <dbReference type="HAMAP-Rule" id="MF_01659"/>
    </source>
</evidence>
<name>MEND_PROM2</name>
<accession>A8G3X3</accession>
<organism>
    <name type="scientific">Prochlorococcus marinus (strain MIT 9215)</name>
    <dbReference type="NCBI Taxonomy" id="93060"/>
    <lineage>
        <taxon>Bacteria</taxon>
        <taxon>Bacillati</taxon>
        <taxon>Cyanobacteriota</taxon>
        <taxon>Cyanophyceae</taxon>
        <taxon>Synechococcales</taxon>
        <taxon>Prochlorococcaceae</taxon>
        <taxon>Prochlorococcus</taxon>
    </lineage>
</organism>
<keyword id="KW-0460">Magnesium</keyword>
<keyword id="KW-0464">Manganese</keyword>
<keyword id="KW-0479">Metal-binding</keyword>
<keyword id="KW-0786">Thiamine pyrophosphate</keyword>
<keyword id="KW-0808">Transferase</keyword>
<sequence length="587" mass="65980">MTSSIECKNFLRSLQLLNLLIKIGVQNLIVCPGSRSAPLAIAAGELNKLGLVNIFNSIDERSAGFHSLGISAASGNLSLVITTSGTAVSNLLPAAVEADRSCKGIIFLTADRPLRLKDCGSNQTVNQEDFLSSVCRRVLSTNLNGLHETQENEILNLVRIIEKQISTFPGPIHLNIPIDKPLGISFLNKKNVLEVFKRIYLKKKYIFQEFEIKSDKKKFLEISKSLNLDESGIILVGPYQGSVNDLTSFNKSLERLQEITGWPVFADPVSGVYSDLRGLVVNWELVLRKNKNSINCHQLLRLGPMSSSIDLEKFLINFEGIQILIKEKNYRKLDPIKKSFEYDFGLSNFTTLLIEELSINEKNKKSLIPMALDLIEEGEQIKEILKEKITQDNQITEYMLANRVPKLWPAENPIMLSASSPIRDWLTFSENGTLTRNCFSFRGASGIDGTLSLAVGIARIKNPLLLVTGDLAFIHDINGWLIENSVDMNLTILLIDNNGGNIFNRIYKENLKEDELRKLFLMPKEINWPKLAEGYQVNFKNVANFKKLREALDWSISIQKSVIIKVDIDPENEIFEKNALLEKIIGS</sequence>
<feature type="chain" id="PRO_0000341800" description="2-succinyl-5-enolpyruvyl-6-hydroxy-3-cyclohexene-1-carboxylate synthase">
    <location>
        <begin position="1"/>
        <end position="587"/>
    </location>
</feature>
<protein>
    <recommendedName>
        <fullName evidence="1">2-succinyl-5-enolpyruvyl-6-hydroxy-3-cyclohexene-1-carboxylate synthase</fullName>
        <shortName evidence="1">SEPHCHC synthase</shortName>
        <ecNumber evidence="1">2.2.1.9</ecNumber>
    </recommendedName>
</protein>
<comment type="function">
    <text evidence="1">Catalyzes the thiamine diphosphate-dependent decarboxylation of 2-oxoglutarate and the subsequent addition of the resulting succinic semialdehyde-thiamine pyrophosphate anion to isochorismate to yield 2-succinyl-5-enolpyruvyl-6-hydroxy-3-cyclohexene-1-carboxylate (SEPHCHC).</text>
</comment>
<comment type="catalytic activity">
    <reaction evidence="1">
        <text>isochorismate + 2-oxoglutarate + H(+) = 5-enolpyruvoyl-6-hydroxy-2-succinyl-cyclohex-3-ene-1-carboxylate + CO2</text>
        <dbReference type="Rhea" id="RHEA:25593"/>
        <dbReference type="ChEBI" id="CHEBI:15378"/>
        <dbReference type="ChEBI" id="CHEBI:16526"/>
        <dbReference type="ChEBI" id="CHEBI:16810"/>
        <dbReference type="ChEBI" id="CHEBI:29780"/>
        <dbReference type="ChEBI" id="CHEBI:58818"/>
        <dbReference type="EC" id="2.2.1.9"/>
    </reaction>
</comment>
<comment type="cofactor">
    <cofactor evidence="1">
        <name>Mg(2+)</name>
        <dbReference type="ChEBI" id="CHEBI:18420"/>
    </cofactor>
    <cofactor evidence="1">
        <name>Mn(2+)</name>
        <dbReference type="ChEBI" id="CHEBI:29035"/>
    </cofactor>
</comment>
<comment type="cofactor">
    <cofactor evidence="1">
        <name>thiamine diphosphate</name>
        <dbReference type="ChEBI" id="CHEBI:58937"/>
    </cofactor>
    <text evidence="1">Binds 1 thiamine pyrophosphate per subunit.</text>
</comment>
<comment type="pathway">
    <text evidence="1">Quinol/quinone metabolism; 1,4-dihydroxy-2-naphthoate biosynthesis; 1,4-dihydroxy-2-naphthoate from chorismate: step 2/7.</text>
</comment>
<comment type="pathway">
    <text evidence="1">Cofactor biosynthesis; phylloquinone biosynthesis.</text>
</comment>
<comment type="subunit">
    <text evidence="1">Homodimer.</text>
</comment>
<comment type="similarity">
    <text evidence="1">Belongs to the TPP enzyme family. MenD subfamily.</text>
</comment>
<gene>
    <name evidence="1" type="primary">menD</name>
    <name type="ordered locus">P9215_06891</name>
</gene>
<dbReference type="EC" id="2.2.1.9" evidence="1"/>
<dbReference type="EMBL" id="CP000825">
    <property type="protein sequence ID" value="ABV50304.1"/>
    <property type="molecule type" value="Genomic_DNA"/>
</dbReference>
<dbReference type="RefSeq" id="WP_012007424.1">
    <property type="nucleotide sequence ID" value="NC_009840.1"/>
</dbReference>
<dbReference type="SMR" id="A8G3X3"/>
<dbReference type="STRING" id="93060.P9215_06891"/>
<dbReference type="KEGG" id="pmh:P9215_06891"/>
<dbReference type="eggNOG" id="COG1165">
    <property type="taxonomic scope" value="Bacteria"/>
</dbReference>
<dbReference type="HOGENOM" id="CLU_006051_3_0_3"/>
<dbReference type="OrthoDB" id="9791859at2"/>
<dbReference type="UniPathway" id="UPA00995"/>
<dbReference type="UniPathway" id="UPA01057">
    <property type="reaction ID" value="UER00164"/>
</dbReference>
<dbReference type="Proteomes" id="UP000002014">
    <property type="component" value="Chromosome"/>
</dbReference>
<dbReference type="GO" id="GO:0070204">
    <property type="term" value="F:2-succinyl-5-enolpyruvyl-6-hydroxy-3-cyclohexene-1-carboxylic-acid synthase activity"/>
    <property type="evidence" value="ECO:0007669"/>
    <property type="project" value="UniProtKB-UniRule"/>
</dbReference>
<dbReference type="GO" id="GO:0000287">
    <property type="term" value="F:magnesium ion binding"/>
    <property type="evidence" value="ECO:0007669"/>
    <property type="project" value="UniProtKB-UniRule"/>
</dbReference>
<dbReference type="GO" id="GO:0030145">
    <property type="term" value="F:manganese ion binding"/>
    <property type="evidence" value="ECO:0007669"/>
    <property type="project" value="UniProtKB-UniRule"/>
</dbReference>
<dbReference type="GO" id="GO:0030976">
    <property type="term" value="F:thiamine pyrophosphate binding"/>
    <property type="evidence" value="ECO:0007669"/>
    <property type="project" value="UniProtKB-UniRule"/>
</dbReference>
<dbReference type="GO" id="GO:0009234">
    <property type="term" value="P:menaquinone biosynthetic process"/>
    <property type="evidence" value="ECO:0007669"/>
    <property type="project" value="InterPro"/>
</dbReference>
<dbReference type="GO" id="GO:0042372">
    <property type="term" value="P:phylloquinone biosynthetic process"/>
    <property type="evidence" value="ECO:0007669"/>
    <property type="project" value="UniProtKB-UniRule"/>
</dbReference>
<dbReference type="CDD" id="cd07037">
    <property type="entry name" value="TPP_PYR_MenD"/>
    <property type="match status" value="1"/>
</dbReference>
<dbReference type="CDD" id="cd02009">
    <property type="entry name" value="TPP_SHCHC_synthase"/>
    <property type="match status" value="1"/>
</dbReference>
<dbReference type="Gene3D" id="3.40.50.970">
    <property type="match status" value="2"/>
</dbReference>
<dbReference type="Gene3D" id="3.40.50.1220">
    <property type="entry name" value="TPP-binding domain"/>
    <property type="match status" value="1"/>
</dbReference>
<dbReference type="HAMAP" id="MF_01659">
    <property type="entry name" value="MenD"/>
    <property type="match status" value="1"/>
</dbReference>
<dbReference type="InterPro" id="IPR004433">
    <property type="entry name" value="MenaQ_synth_MenD"/>
</dbReference>
<dbReference type="InterPro" id="IPR029061">
    <property type="entry name" value="THDP-binding"/>
</dbReference>
<dbReference type="InterPro" id="IPR012001">
    <property type="entry name" value="Thiamin_PyroP_enz_TPP-bd_dom"/>
</dbReference>
<dbReference type="InterPro" id="IPR011766">
    <property type="entry name" value="TPP_enzyme_TPP-bd"/>
</dbReference>
<dbReference type="NCBIfam" id="TIGR00173">
    <property type="entry name" value="menD"/>
    <property type="match status" value="1"/>
</dbReference>
<dbReference type="PANTHER" id="PTHR42916">
    <property type="entry name" value="2-SUCCINYL-5-ENOLPYRUVYL-6-HYDROXY-3-CYCLOHEXENE-1-CARBOXYLATE SYNTHASE"/>
    <property type="match status" value="1"/>
</dbReference>
<dbReference type="PANTHER" id="PTHR42916:SF1">
    <property type="entry name" value="PROTEIN PHYLLO, CHLOROPLASTIC"/>
    <property type="match status" value="1"/>
</dbReference>
<dbReference type="Pfam" id="PF02775">
    <property type="entry name" value="TPP_enzyme_C"/>
    <property type="match status" value="1"/>
</dbReference>
<dbReference type="Pfam" id="PF02776">
    <property type="entry name" value="TPP_enzyme_N"/>
    <property type="match status" value="1"/>
</dbReference>
<dbReference type="PIRSF" id="PIRSF004983">
    <property type="entry name" value="MenD"/>
    <property type="match status" value="1"/>
</dbReference>
<dbReference type="SUPFAM" id="SSF52518">
    <property type="entry name" value="Thiamin diphosphate-binding fold (THDP-binding)"/>
    <property type="match status" value="2"/>
</dbReference>
<reference key="1">
    <citation type="journal article" date="2007" name="PLoS Genet.">
        <title>Patterns and implications of gene gain and loss in the evolution of Prochlorococcus.</title>
        <authorList>
            <person name="Kettler G.C."/>
            <person name="Martiny A.C."/>
            <person name="Huang K."/>
            <person name="Zucker J."/>
            <person name="Coleman M.L."/>
            <person name="Rodrigue S."/>
            <person name="Chen F."/>
            <person name="Lapidus A."/>
            <person name="Ferriera S."/>
            <person name="Johnson J."/>
            <person name="Steglich C."/>
            <person name="Church G.M."/>
            <person name="Richardson P."/>
            <person name="Chisholm S.W."/>
        </authorList>
    </citation>
    <scope>NUCLEOTIDE SEQUENCE [LARGE SCALE GENOMIC DNA]</scope>
    <source>
        <strain>MIT 9215</strain>
    </source>
</reference>
<proteinExistence type="inferred from homology"/>